<sequence length="562" mass="63593">MNQKQVIAERLAAILPSLEVEAIYNLLEKPKSSEMGDIAFPAFSLAKVERKAPQAIAADIVEKLDTTGFENVVATGPYVNFFLDKAAISHQVLTDVITEKDQYGKLNIGQGRNVTIDMSSPNIAKPFSVGHLRSTVIGDALANIHEKLGYKPIRINHLGDWGKQFGMLIVAYKLWGDKAAVEADPISELLKLYVRINAEAEEKPELDDEARQWFKKLEDGDPEAHELWQWFRDESLVEFNRIYDKLDVTFDSYNGEAFYNDKMDEGIQILEEKGLLQESKGAKIVDLESYNLPPALIMKTDGATLYITRDMATAMYRKRTYDFVKSIYVVGQEQINHFKQLKAVLKEMDFDWSDDMTHITFGLVTKDKKKLSTRKGNIILLEPTLDEAISRALTQIEAKNPDLENKEEVAHAVGVGAVKFYDLKTDRDNGYDFDLEAMVSFEGETGPYVQYAYARIQSILRKANFVPNAENDYKLADTESWEIIKHIQNFSAVVERAGDKFDPSLIAKYAINLAQAFNKYYAHTRILDESPERDSRLALAYATGLVLKEALRLLGVKAPEKM</sequence>
<reference key="1">
    <citation type="journal article" date="2007" name="PLoS ONE">
        <title>A glimpse of streptococcal toxic shock syndrome from comparative genomics of S. suis 2 Chinese isolates.</title>
        <authorList>
            <person name="Chen C."/>
            <person name="Tang J."/>
            <person name="Dong W."/>
            <person name="Wang C."/>
            <person name="Feng Y."/>
            <person name="Wang J."/>
            <person name="Zheng F."/>
            <person name="Pan X."/>
            <person name="Liu D."/>
            <person name="Li M."/>
            <person name="Song Y."/>
            <person name="Zhu X."/>
            <person name="Sun H."/>
            <person name="Feng T."/>
            <person name="Guo Z."/>
            <person name="Ju A."/>
            <person name="Ge J."/>
            <person name="Dong Y."/>
            <person name="Sun W."/>
            <person name="Jiang Y."/>
            <person name="Wang J."/>
            <person name="Yan J."/>
            <person name="Yang H."/>
            <person name="Wang X."/>
            <person name="Gao G.F."/>
            <person name="Yang R."/>
            <person name="Wang J."/>
            <person name="Yu J."/>
        </authorList>
    </citation>
    <scope>NUCLEOTIDE SEQUENCE [LARGE SCALE GENOMIC DNA]</scope>
    <source>
        <strain>05ZYH33</strain>
    </source>
</reference>
<feature type="chain" id="PRO_1000018134" description="Arginine--tRNA ligase">
    <location>
        <begin position="1"/>
        <end position="562"/>
    </location>
</feature>
<feature type="short sequence motif" description="'HIGH' region">
    <location>
        <begin position="121"/>
        <end position="131"/>
    </location>
</feature>
<name>SYR_STRSY</name>
<comment type="catalytic activity">
    <reaction evidence="1">
        <text>tRNA(Arg) + L-arginine + ATP = L-arginyl-tRNA(Arg) + AMP + diphosphate</text>
        <dbReference type="Rhea" id="RHEA:20301"/>
        <dbReference type="Rhea" id="RHEA-COMP:9658"/>
        <dbReference type="Rhea" id="RHEA-COMP:9673"/>
        <dbReference type="ChEBI" id="CHEBI:30616"/>
        <dbReference type="ChEBI" id="CHEBI:32682"/>
        <dbReference type="ChEBI" id="CHEBI:33019"/>
        <dbReference type="ChEBI" id="CHEBI:78442"/>
        <dbReference type="ChEBI" id="CHEBI:78513"/>
        <dbReference type="ChEBI" id="CHEBI:456215"/>
        <dbReference type="EC" id="6.1.1.19"/>
    </reaction>
</comment>
<comment type="subunit">
    <text evidence="1">Monomer.</text>
</comment>
<comment type="subcellular location">
    <subcellularLocation>
        <location evidence="1">Cytoplasm</location>
    </subcellularLocation>
</comment>
<comment type="similarity">
    <text evidence="1">Belongs to the class-I aminoacyl-tRNA synthetase family.</text>
</comment>
<evidence type="ECO:0000255" key="1">
    <source>
        <dbReference type="HAMAP-Rule" id="MF_00123"/>
    </source>
</evidence>
<organism>
    <name type="scientific">Streptococcus suis (strain 05ZYH33)</name>
    <dbReference type="NCBI Taxonomy" id="391295"/>
    <lineage>
        <taxon>Bacteria</taxon>
        <taxon>Bacillati</taxon>
        <taxon>Bacillota</taxon>
        <taxon>Bacilli</taxon>
        <taxon>Lactobacillales</taxon>
        <taxon>Streptococcaceae</taxon>
        <taxon>Streptococcus</taxon>
    </lineage>
</organism>
<keyword id="KW-0030">Aminoacyl-tRNA synthetase</keyword>
<keyword id="KW-0067">ATP-binding</keyword>
<keyword id="KW-0963">Cytoplasm</keyword>
<keyword id="KW-0436">Ligase</keyword>
<keyword id="KW-0547">Nucleotide-binding</keyword>
<keyword id="KW-0648">Protein biosynthesis</keyword>
<gene>
    <name evidence="1" type="primary">argS</name>
    <name type="ordered locus">SSU05_2126</name>
</gene>
<accession>A4VYA3</accession>
<dbReference type="EC" id="6.1.1.19" evidence="1"/>
<dbReference type="EMBL" id="CP000407">
    <property type="protein sequence ID" value="ABP91092.1"/>
    <property type="molecule type" value="Genomic_DNA"/>
</dbReference>
<dbReference type="SMR" id="A4VYA3"/>
<dbReference type="STRING" id="391295.SSU05_2126"/>
<dbReference type="KEGG" id="ssu:SSU05_2126"/>
<dbReference type="eggNOG" id="COG0018">
    <property type="taxonomic scope" value="Bacteria"/>
</dbReference>
<dbReference type="HOGENOM" id="CLU_006406_6_2_9"/>
<dbReference type="GO" id="GO:0005737">
    <property type="term" value="C:cytoplasm"/>
    <property type="evidence" value="ECO:0007669"/>
    <property type="project" value="UniProtKB-SubCell"/>
</dbReference>
<dbReference type="GO" id="GO:0004814">
    <property type="term" value="F:arginine-tRNA ligase activity"/>
    <property type="evidence" value="ECO:0007669"/>
    <property type="project" value="UniProtKB-UniRule"/>
</dbReference>
<dbReference type="GO" id="GO:0005524">
    <property type="term" value="F:ATP binding"/>
    <property type="evidence" value="ECO:0007669"/>
    <property type="project" value="UniProtKB-UniRule"/>
</dbReference>
<dbReference type="GO" id="GO:0006420">
    <property type="term" value="P:arginyl-tRNA aminoacylation"/>
    <property type="evidence" value="ECO:0007669"/>
    <property type="project" value="UniProtKB-UniRule"/>
</dbReference>
<dbReference type="CDD" id="cd07956">
    <property type="entry name" value="Anticodon_Ia_Arg"/>
    <property type="match status" value="1"/>
</dbReference>
<dbReference type="CDD" id="cd00671">
    <property type="entry name" value="ArgRS_core"/>
    <property type="match status" value="1"/>
</dbReference>
<dbReference type="FunFam" id="3.40.50.620:FF:000116">
    <property type="entry name" value="Arginine--tRNA ligase"/>
    <property type="match status" value="1"/>
</dbReference>
<dbReference type="FunFam" id="1.10.730.10:FF:000006">
    <property type="entry name" value="Arginyl-tRNA synthetase 2, mitochondrial"/>
    <property type="match status" value="1"/>
</dbReference>
<dbReference type="Gene3D" id="3.30.1360.70">
    <property type="entry name" value="Arginyl tRNA synthetase N-terminal domain"/>
    <property type="match status" value="1"/>
</dbReference>
<dbReference type="Gene3D" id="3.40.50.620">
    <property type="entry name" value="HUPs"/>
    <property type="match status" value="1"/>
</dbReference>
<dbReference type="Gene3D" id="1.10.730.10">
    <property type="entry name" value="Isoleucyl-tRNA Synthetase, Domain 1"/>
    <property type="match status" value="1"/>
</dbReference>
<dbReference type="HAMAP" id="MF_00123">
    <property type="entry name" value="Arg_tRNA_synth"/>
    <property type="match status" value="1"/>
</dbReference>
<dbReference type="InterPro" id="IPR001278">
    <property type="entry name" value="Arg-tRNA-ligase"/>
</dbReference>
<dbReference type="InterPro" id="IPR005148">
    <property type="entry name" value="Arg-tRNA-synth_N"/>
</dbReference>
<dbReference type="InterPro" id="IPR036695">
    <property type="entry name" value="Arg-tRNA-synth_N_sf"/>
</dbReference>
<dbReference type="InterPro" id="IPR035684">
    <property type="entry name" value="ArgRS_core"/>
</dbReference>
<dbReference type="InterPro" id="IPR008909">
    <property type="entry name" value="DALR_anticod-bd"/>
</dbReference>
<dbReference type="InterPro" id="IPR014729">
    <property type="entry name" value="Rossmann-like_a/b/a_fold"/>
</dbReference>
<dbReference type="InterPro" id="IPR009080">
    <property type="entry name" value="tRNAsynth_Ia_anticodon-bd"/>
</dbReference>
<dbReference type="NCBIfam" id="TIGR00456">
    <property type="entry name" value="argS"/>
    <property type="match status" value="1"/>
</dbReference>
<dbReference type="PANTHER" id="PTHR11956:SF5">
    <property type="entry name" value="ARGININE--TRNA LIGASE, CYTOPLASMIC"/>
    <property type="match status" value="1"/>
</dbReference>
<dbReference type="PANTHER" id="PTHR11956">
    <property type="entry name" value="ARGINYL-TRNA SYNTHETASE"/>
    <property type="match status" value="1"/>
</dbReference>
<dbReference type="Pfam" id="PF03485">
    <property type="entry name" value="Arg_tRNA_synt_N"/>
    <property type="match status" value="1"/>
</dbReference>
<dbReference type="Pfam" id="PF05746">
    <property type="entry name" value="DALR_1"/>
    <property type="match status" value="1"/>
</dbReference>
<dbReference type="Pfam" id="PF00750">
    <property type="entry name" value="tRNA-synt_1d"/>
    <property type="match status" value="1"/>
</dbReference>
<dbReference type="PRINTS" id="PR01038">
    <property type="entry name" value="TRNASYNTHARG"/>
</dbReference>
<dbReference type="SMART" id="SM01016">
    <property type="entry name" value="Arg_tRNA_synt_N"/>
    <property type="match status" value="1"/>
</dbReference>
<dbReference type="SMART" id="SM00836">
    <property type="entry name" value="DALR_1"/>
    <property type="match status" value="1"/>
</dbReference>
<dbReference type="SUPFAM" id="SSF47323">
    <property type="entry name" value="Anticodon-binding domain of a subclass of class I aminoacyl-tRNA synthetases"/>
    <property type="match status" value="1"/>
</dbReference>
<dbReference type="SUPFAM" id="SSF55190">
    <property type="entry name" value="Arginyl-tRNA synthetase (ArgRS), N-terminal 'additional' domain"/>
    <property type="match status" value="1"/>
</dbReference>
<dbReference type="SUPFAM" id="SSF52374">
    <property type="entry name" value="Nucleotidylyl transferase"/>
    <property type="match status" value="1"/>
</dbReference>
<proteinExistence type="inferred from homology"/>
<protein>
    <recommendedName>
        <fullName evidence="1">Arginine--tRNA ligase</fullName>
        <ecNumber evidence="1">6.1.1.19</ecNumber>
    </recommendedName>
    <alternativeName>
        <fullName evidence="1">Arginyl-tRNA synthetase</fullName>
        <shortName evidence="1">ArgRS</shortName>
    </alternativeName>
</protein>